<sequence length="203" mass="22481">MFNVSNNVAPSRYQGPSSTSVTPNAFHDVPSLGQKVGAGSQKDVFHSRQDPRQCICLFRPGTTGSIPAEQYAQKELETTKQLKNLGFPVVDAHALVKHQGSVGVAKDFIHNALDSEDIVNNKKSLPDNLKFNKNVLEDCNAIIRRLKNLEVHIEDLQFLVDHNGHVLINDPRDVVRSSPDKSISKVNELRSHALNNLLDIDSD</sequence>
<feature type="chain" id="PRO_0000461098" description="Type III effector protein HopBF1">
    <location>
        <begin position="1"/>
        <end position="203"/>
    </location>
</feature>
<feature type="region of interest" description="Disordered" evidence="1">
    <location>
        <begin position="1"/>
        <end position="23"/>
    </location>
</feature>
<feature type="active site" evidence="5">
    <location>
        <position position="155"/>
    </location>
</feature>
<feature type="binding site" evidence="5 8">
    <location>
        <position position="40"/>
    </location>
    <ligand>
        <name>ATP</name>
        <dbReference type="ChEBI" id="CHEBI:30616"/>
    </ligand>
</feature>
<feature type="binding site" evidence="5 8">
    <location>
        <position position="41"/>
    </location>
    <ligand>
        <name>ATP</name>
        <dbReference type="ChEBI" id="CHEBI:30616"/>
    </ligand>
</feature>
<feature type="binding site" evidence="5 8">
    <location>
        <position position="42"/>
    </location>
    <ligand>
        <name>ATP</name>
        <dbReference type="ChEBI" id="CHEBI:30616"/>
    </ligand>
</feature>
<feature type="binding site" evidence="5 8">
    <location>
        <position position="107"/>
    </location>
    <ligand>
        <name>ATP</name>
        <dbReference type="ChEBI" id="CHEBI:30616"/>
    </ligand>
</feature>
<feature type="binding site" evidence="5 8">
    <location>
        <position position="109"/>
    </location>
    <ligand>
        <name>ATP</name>
        <dbReference type="ChEBI" id="CHEBI:30616"/>
    </ligand>
</feature>
<feature type="binding site" evidence="5 8">
    <location>
        <position position="114"/>
    </location>
    <ligand>
        <name>ATP</name>
        <dbReference type="ChEBI" id="CHEBI:30616"/>
    </ligand>
</feature>
<feature type="binding site" evidence="5 8">
    <location>
        <position position="157"/>
    </location>
    <ligand>
        <name>ATP</name>
        <dbReference type="ChEBI" id="CHEBI:30616"/>
    </ligand>
</feature>
<feature type="mutagenesis site" description="Displays a minor growth phenotype in yeast compared to wild-type HopBF1. Is unable to interact with HSP90 and is targeted to the proteasome for degradation." evidence="2">
    <original>V</original>
    <variation>D</variation>
    <location>
        <position position="89"/>
    </location>
</feature>
<feature type="mutagenesis site" description="Loss of kinase activity." evidence="2">
    <original>D</original>
    <variation>A</variation>
    <location>
        <position position="170"/>
    </location>
</feature>
<feature type="strand" evidence="10">
    <location>
        <begin position="26"/>
        <end position="28"/>
    </location>
</feature>
<feature type="strand" evidence="10">
    <location>
        <begin position="31"/>
        <end position="38"/>
    </location>
</feature>
<feature type="strand" evidence="10">
    <location>
        <begin position="40"/>
        <end position="49"/>
    </location>
</feature>
<feature type="strand" evidence="10">
    <location>
        <begin position="53"/>
        <end position="58"/>
    </location>
</feature>
<feature type="turn" evidence="10">
    <location>
        <begin position="60"/>
        <end position="65"/>
    </location>
</feature>
<feature type="helix" evidence="10">
    <location>
        <begin position="68"/>
        <end position="84"/>
    </location>
</feature>
<feature type="strand" evidence="10">
    <location>
        <begin position="92"/>
        <end position="98"/>
    </location>
</feature>
<feature type="strand" evidence="10">
    <location>
        <begin position="101"/>
        <end position="107"/>
    </location>
</feature>
<feature type="helix" evidence="10">
    <location>
        <begin position="115"/>
        <end position="119"/>
    </location>
</feature>
<feature type="helix" evidence="10">
    <location>
        <begin position="129"/>
        <end position="149"/>
    </location>
</feature>
<feature type="strand" evidence="10">
    <location>
        <begin position="151"/>
        <end position="154"/>
    </location>
</feature>
<feature type="strand" evidence="10">
    <location>
        <begin position="157"/>
        <end position="160"/>
    </location>
</feature>
<feature type="strand" evidence="10">
    <location>
        <begin position="166"/>
        <end position="170"/>
    </location>
</feature>
<feature type="strand" evidence="10">
    <location>
        <begin position="173"/>
        <end position="177"/>
    </location>
</feature>
<feature type="helix" evidence="10">
    <location>
        <begin position="180"/>
        <end position="198"/>
    </location>
</feature>
<organism>
    <name type="scientific">Ewingella americana (strain ATCC 33852 / DSM 4580 / CCUG 14506 / JCM 5911 / LMG 7869 / NCTC 12157 / CDC 1468-78)</name>
    <dbReference type="NCBI Taxonomy" id="910964"/>
    <lineage>
        <taxon>Bacteria</taxon>
        <taxon>Pseudomonadati</taxon>
        <taxon>Pseudomonadota</taxon>
        <taxon>Gammaproteobacteria</taxon>
        <taxon>Enterobacterales</taxon>
        <taxon>Yersiniaceae</taxon>
        <taxon>Ewingella</taxon>
    </lineage>
</organism>
<dbReference type="EC" id="2.7.1.-" evidence="2"/>
<dbReference type="EMBL" id="JMPJ01000038">
    <property type="protein sequence ID" value="KFC83258.1"/>
    <property type="molecule type" value="Genomic_DNA"/>
</dbReference>
<dbReference type="RefSeq" id="WP_034789740.1">
    <property type="nucleotide sequence ID" value="NZ_JMPJ01000038.1"/>
</dbReference>
<dbReference type="PDB" id="6PWD">
    <property type="method" value="X-ray"/>
    <property type="resolution" value="2.47 A"/>
    <property type="chains" value="A=1-203"/>
</dbReference>
<dbReference type="PDB" id="6PWG">
    <property type="method" value="X-ray"/>
    <property type="resolution" value="1.89 A"/>
    <property type="chains" value="A/B=1-203"/>
</dbReference>
<dbReference type="PDB" id="8HOE">
    <property type="method" value="X-ray"/>
    <property type="resolution" value="2.20 A"/>
    <property type="chains" value="A=25-203"/>
</dbReference>
<dbReference type="PDBsum" id="6PWD"/>
<dbReference type="PDBsum" id="6PWG"/>
<dbReference type="PDBsum" id="8HOE"/>
<dbReference type="SMR" id="A0A085GHR3"/>
<dbReference type="GeneID" id="78379671"/>
<dbReference type="eggNOG" id="ENOG5033PM3">
    <property type="taxonomic scope" value="Bacteria"/>
</dbReference>
<dbReference type="OrthoDB" id="6626364at2"/>
<dbReference type="Proteomes" id="UP000028640">
    <property type="component" value="Unassembled WGS sequence"/>
</dbReference>
<dbReference type="GO" id="GO:0005576">
    <property type="term" value="C:extracellular region"/>
    <property type="evidence" value="ECO:0007669"/>
    <property type="project" value="UniProtKB-SubCell"/>
</dbReference>
<dbReference type="GO" id="GO:0043657">
    <property type="term" value="C:host cell"/>
    <property type="evidence" value="ECO:0007669"/>
    <property type="project" value="UniProtKB-SubCell"/>
</dbReference>
<dbReference type="GO" id="GO:0005524">
    <property type="term" value="F:ATP binding"/>
    <property type="evidence" value="ECO:0007669"/>
    <property type="project" value="UniProtKB-KW"/>
</dbReference>
<dbReference type="GO" id="GO:0016301">
    <property type="term" value="F:kinase activity"/>
    <property type="evidence" value="ECO:0007669"/>
    <property type="project" value="UniProtKB-KW"/>
</dbReference>
<dbReference type="CDD" id="cd20900">
    <property type="entry name" value="HopBF1"/>
    <property type="match status" value="1"/>
</dbReference>
<dbReference type="InterPro" id="IPR054555">
    <property type="entry name" value="T3SS_HopBF1-like"/>
</dbReference>
<dbReference type="NCBIfam" id="NF035942">
    <property type="entry name" value="T3SS_eff_HopBF1"/>
    <property type="match status" value="1"/>
</dbReference>
<name>HPBF1_EWIA3</name>
<proteinExistence type="evidence at protein level"/>
<protein>
    <recommendedName>
        <fullName evidence="4">Type III effector protein HopBF1</fullName>
    </recommendedName>
    <alternativeName>
        <fullName evidence="3">Eukaryotic-specific HSP90 protein kinase</fullName>
        <ecNumber evidence="2">2.7.1.-</ecNumber>
    </alternativeName>
    <alternativeName>
        <fullName evidence="4">Type III secretion system effector HopBF1</fullName>
        <shortName evidence="4">T3SS effector HopBF1</shortName>
    </alternativeName>
</protein>
<accession>A0A085GHR3</accession>
<comment type="function">
    <text evidence="2">Effector protein that targets and inactivates the eukaryotic molecular chaperone HSP90 during infection (PubMed:31522888). HopBF1 is recognized by HSP90 as a host client (PubMed:31522888). As a result, HopBF1 phosphorylates HSP90, leading to the inactivation of the HSP90 ATPase activity and chaperone function (PubMed:31522888). In vitro, can phosphorylate the recombinant yeast HSP82 (HSP90) and human HSP 90-beta on Ser-108 (PubMed:31522888).</text>
</comment>
<comment type="catalytic activity">
    <reaction evidence="2">
        <text>L-seryl-[protein] + ATP = O-phospho-L-seryl-[protein] + ADP + H(+)</text>
        <dbReference type="Rhea" id="RHEA:17989"/>
        <dbReference type="Rhea" id="RHEA-COMP:9863"/>
        <dbReference type="Rhea" id="RHEA-COMP:11604"/>
        <dbReference type="ChEBI" id="CHEBI:15378"/>
        <dbReference type="ChEBI" id="CHEBI:29999"/>
        <dbReference type="ChEBI" id="CHEBI:30616"/>
        <dbReference type="ChEBI" id="CHEBI:83421"/>
        <dbReference type="ChEBI" id="CHEBI:456216"/>
    </reaction>
    <physiologicalReaction direction="left-to-right" evidence="2">
        <dbReference type="Rhea" id="RHEA:17990"/>
    </physiologicalReaction>
</comment>
<comment type="subcellular location">
    <subcellularLocation>
        <location evidence="5">Secreted</location>
    </subcellularLocation>
    <subcellularLocation>
        <location evidence="5">Host cell</location>
    </subcellularLocation>
    <text evidence="5">Secreted via the type III secretion system (T3SS).</text>
</comment>
<comment type="domain">
    <text evidence="2">Adopts a minimal and atypical protein kinase fold.</text>
</comment>
<comment type="miscellaneous">
    <text evidence="5">HopBF1 is specific for eukaryotic HSP90, despite the fact that the target Ser is strictly conserved in prokaryotic homologs. This mechanism appears to have evolved to prevent phosphorylation and inactivation of the pathogen's own HSP90.</text>
</comment>
<comment type="similarity">
    <text evidence="4">Belongs to the HopBF1 family.</text>
</comment>
<reference key="1">
    <citation type="submission" date="2014-05" db="EMBL/GenBank/DDBJ databases">
        <title>ATOL: Assembling a taxonomically balanced genome-scale reconstruction of the evolutionary history of the Enterobacteriaceae.</title>
        <authorList>
            <person name="Plunkett G. III"/>
            <person name="Neeno-Eckwall E.C."/>
            <person name="Glasner J.D."/>
            <person name="Perna N.T."/>
        </authorList>
    </citation>
    <scope>NUCLEOTIDE SEQUENCE [LARGE SCALE GENOMIC DNA]</scope>
    <source>
        <strain>ATCC 33852 / DSM 4580 / CCUG 14506 / JCM 5911 / LMG 7869 / NCTC 12157 / CDC 1468-78</strain>
    </source>
</reference>
<reference evidence="7 8" key="2">
    <citation type="journal article" date="2019" name="Cell">
        <title>A Bacterial Effector Mimics a Host HSP90 Client to Undermine Immunity.</title>
        <authorList>
            <person name="Lopez V.A."/>
            <person name="Park B.C."/>
            <person name="Nowak D."/>
            <person name="Sreelatha A."/>
            <person name="Zembek P."/>
            <person name="Fernandez J."/>
            <person name="Servage K.A."/>
            <person name="Gradowski M."/>
            <person name="Hennig J."/>
            <person name="Tomchick D.R."/>
            <person name="Pawlowski K."/>
            <person name="Krzymowska M."/>
            <person name="Tagliabracci V.S."/>
        </authorList>
    </citation>
    <scope>X-RAY CRYSTALLOGRAPHY (1.89 ANGSTROMS) OF APOPROTEIN AND IN COMPLEX WITH ATP ANALOG</scope>
    <scope>FUNCTION</scope>
    <scope>CATALYTIC ACTIVITY</scope>
    <scope>DOMAIN</scope>
    <scope>MUTAGENESIS OF VAL-89 AND ASP-170</scope>
    <scope>PROPOSED ACTIVE SITE</scope>
</reference>
<reference evidence="9" key="3">
    <citation type="submission" date="2022-12" db="PDB data bank">
        <title>Apo structure of HopBF1 kinase from Ewingella americana.</title>
        <authorList>
            <person name="Wang C.C."/>
        </authorList>
    </citation>
    <scope>X-RAY CRYSTALLOGRAPHY (2.20 ANGSTROMS) OF 25-203</scope>
</reference>
<keyword id="KW-0002">3D-structure</keyword>
<keyword id="KW-0067">ATP-binding</keyword>
<keyword id="KW-0418">Kinase</keyword>
<keyword id="KW-0547">Nucleotide-binding</keyword>
<keyword id="KW-1185">Reference proteome</keyword>
<keyword id="KW-0964">Secreted</keyword>
<keyword id="KW-0808">Transferase</keyword>
<keyword id="KW-0843">Virulence</keyword>
<gene>
    <name evidence="3" type="primary">hopBF1</name>
    <name evidence="6" type="ORF">GEAM_1328</name>
</gene>
<evidence type="ECO:0000256" key="1">
    <source>
        <dbReference type="SAM" id="MobiDB-lite"/>
    </source>
</evidence>
<evidence type="ECO:0000269" key="2">
    <source>
    </source>
</evidence>
<evidence type="ECO:0000303" key="3">
    <source>
    </source>
</evidence>
<evidence type="ECO:0000305" key="4"/>
<evidence type="ECO:0000305" key="5">
    <source>
    </source>
</evidence>
<evidence type="ECO:0000312" key="6">
    <source>
        <dbReference type="EMBL" id="KFC83258.1"/>
    </source>
</evidence>
<evidence type="ECO:0007744" key="7">
    <source>
        <dbReference type="PDB" id="6PWD"/>
    </source>
</evidence>
<evidence type="ECO:0007744" key="8">
    <source>
        <dbReference type="PDB" id="6PWG"/>
    </source>
</evidence>
<evidence type="ECO:0007744" key="9">
    <source>
        <dbReference type="PDB" id="8HOE"/>
    </source>
</evidence>
<evidence type="ECO:0007829" key="10">
    <source>
        <dbReference type="PDB" id="6PWG"/>
    </source>
</evidence>